<reference key="1">
    <citation type="submission" date="2006-03" db="EMBL/GenBank/DDBJ databases">
        <title>Complete genome sequence of Gemmatimonas aurantiaca T-27 that represents a novel phylum Gemmatimonadetes.</title>
        <authorList>
            <person name="Takasaki K."/>
            <person name="Ichikawa N."/>
            <person name="Miura H."/>
            <person name="Matsushita S."/>
            <person name="Watanabe Y."/>
            <person name="Oguchi A."/>
            <person name="Ankai A."/>
            <person name="Yashiro I."/>
            <person name="Takahashi M."/>
            <person name="Terui Y."/>
            <person name="Fukui S."/>
            <person name="Yokoyama H."/>
            <person name="Tanikawa S."/>
            <person name="Hanada S."/>
            <person name="Kamagata Y."/>
            <person name="Fujita N."/>
        </authorList>
    </citation>
    <scope>NUCLEOTIDE SEQUENCE [LARGE SCALE GENOMIC DNA]</scope>
    <source>
        <strain>DSM 14586 / JCM 11422 / NBRC 100505 / T-27</strain>
    </source>
</reference>
<sequence length="152" mass="15985">MIIGVLNGPNLNLLGTREPAVYGTATLADIMAHLEGVAGALGVQLRTAQSNSEGALIDILHDWRGVVDGVVVNAGAYTHTSLALRDAFTATAIPFIEVHLSNIHAREPERRHSMLASASIGMICGLGADGYEFGLRGLVRALELKRQSTATG</sequence>
<feature type="chain" id="PRO_1000203676" description="3-dehydroquinate dehydratase">
    <location>
        <begin position="1"/>
        <end position="152"/>
    </location>
</feature>
<feature type="active site" description="Proton acceptor" evidence="1">
    <location>
        <position position="22"/>
    </location>
</feature>
<feature type="active site" description="Proton donor" evidence="1">
    <location>
        <position position="99"/>
    </location>
</feature>
<feature type="binding site" evidence="1">
    <location>
        <position position="73"/>
    </location>
    <ligand>
        <name>substrate</name>
    </ligand>
</feature>
<feature type="binding site" evidence="1">
    <location>
        <position position="79"/>
    </location>
    <ligand>
        <name>substrate</name>
    </ligand>
</feature>
<feature type="binding site" evidence="1">
    <location>
        <position position="86"/>
    </location>
    <ligand>
        <name>substrate</name>
    </ligand>
</feature>
<feature type="binding site" evidence="1">
    <location>
        <begin position="100"/>
        <end position="101"/>
    </location>
    <ligand>
        <name>substrate</name>
    </ligand>
</feature>
<feature type="binding site" evidence="1">
    <location>
        <position position="110"/>
    </location>
    <ligand>
        <name>substrate</name>
    </ligand>
</feature>
<feature type="site" description="Transition state stabilizer" evidence="1">
    <location>
        <position position="17"/>
    </location>
</feature>
<comment type="function">
    <text evidence="1">Catalyzes a trans-dehydration via an enolate intermediate.</text>
</comment>
<comment type="catalytic activity">
    <reaction evidence="1">
        <text>3-dehydroquinate = 3-dehydroshikimate + H2O</text>
        <dbReference type="Rhea" id="RHEA:21096"/>
        <dbReference type="ChEBI" id="CHEBI:15377"/>
        <dbReference type="ChEBI" id="CHEBI:16630"/>
        <dbReference type="ChEBI" id="CHEBI:32364"/>
        <dbReference type="EC" id="4.2.1.10"/>
    </reaction>
</comment>
<comment type="pathway">
    <text evidence="1">Metabolic intermediate biosynthesis; chorismate biosynthesis; chorismate from D-erythrose 4-phosphate and phosphoenolpyruvate: step 3/7.</text>
</comment>
<comment type="subunit">
    <text evidence="1">Homododecamer.</text>
</comment>
<comment type="similarity">
    <text evidence="1">Belongs to the type-II 3-dehydroquinase family.</text>
</comment>
<accession>C1A4E4</accession>
<evidence type="ECO:0000255" key="1">
    <source>
        <dbReference type="HAMAP-Rule" id="MF_00169"/>
    </source>
</evidence>
<name>AROQ_GEMAT</name>
<gene>
    <name evidence="1" type="primary">aroQ</name>
    <name type="ordered locus">GAU_1927</name>
</gene>
<proteinExistence type="inferred from homology"/>
<keyword id="KW-0028">Amino-acid biosynthesis</keyword>
<keyword id="KW-0057">Aromatic amino acid biosynthesis</keyword>
<keyword id="KW-0456">Lyase</keyword>
<keyword id="KW-1185">Reference proteome</keyword>
<dbReference type="EC" id="4.2.1.10" evidence="1"/>
<dbReference type="EMBL" id="AP009153">
    <property type="protein sequence ID" value="BAH38969.1"/>
    <property type="molecule type" value="Genomic_DNA"/>
</dbReference>
<dbReference type="RefSeq" id="WP_012683416.1">
    <property type="nucleotide sequence ID" value="NC_012489.1"/>
</dbReference>
<dbReference type="SMR" id="C1A4E4"/>
<dbReference type="STRING" id="379066.GAU_1927"/>
<dbReference type="KEGG" id="gau:GAU_1927"/>
<dbReference type="eggNOG" id="COG0757">
    <property type="taxonomic scope" value="Bacteria"/>
</dbReference>
<dbReference type="HOGENOM" id="CLU_090968_1_0_0"/>
<dbReference type="OrthoDB" id="9790793at2"/>
<dbReference type="UniPathway" id="UPA00053">
    <property type="reaction ID" value="UER00086"/>
</dbReference>
<dbReference type="Proteomes" id="UP000002209">
    <property type="component" value="Chromosome"/>
</dbReference>
<dbReference type="GO" id="GO:0003855">
    <property type="term" value="F:3-dehydroquinate dehydratase activity"/>
    <property type="evidence" value="ECO:0007669"/>
    <property type="project" value="UniProtKB-UniRule"/>
</dbReference>
<dbReference type="GO" id="GO:0008652">
    <property type="term" value="P:amino acid biosynthetic process"/>
    <property type="evidence" value="ECO:0007669"/>
    <property type="project" value="UniProtKB-KW"/>
</dbReference>
<dbReference type="GO" id="GO:0009073">
    <property type="term" value="P:aromatic amino acid family biosynthetic process"/>
    <property type="evidence" value="ECO:0007669"/>
    <property type="project" value="UniProtKB-KW"/>
</dbReference>
<dbReference type="GO" id="GO:0009423">
    <property type="term" value="P:chorismate biosynthetic process"/>
    <property type="evidence" value="ECO:0007669"/>
    <property type="project" value="UniProtKB-UniRule"/>
</dbReference>
<dbReference type="GO" id="GO:0019631">
    <property type="term" value="P:quinate catabolic process"/>
    <property type="evidence" value="ECO:0007669"/>
    <property type="project" value="TreeGrafter"/>
</dbReference>
<dbReference type="CDD" id="cd00466">
    <property type="entry name" value="DHQase_II"/>
    <property type="match status" value="1"/>
</dbReference>
<dbReference type="Gene3D" id="3.40.50.9100">
    <property type="entry name" value="Dehydroquinase, class II"/>
    <property type="match status" value="1"/>
</dbReference>
<dbReference type="HAMAP" id="MF_00169">
    <property type="entry name" value="AroQ"/>
    <property type="match status" value="1"/>
</dbReference>
<dbReference type="InterPro" id="IPR001874">
    <property type="entry name" value="DHquinase_II"/>
</dbReference>
<dbReference type="InterPro" id="IPR018509">
    <property type="entry name" value="DHquinase_II_CS"/>
</dbReference>
<dbReference type="InterPro" id="IPR036441">
    <property type="entry name" value="DHquinase_II_sf"/>
</dbReference>
<dbReference type="NCBIfam" id="TIGR01088">
    <property type="entry name" value="aroQ"/>
    <property type="match status" value="1"/>
</dbReference>
<dbReference type="NCBIfam" id="NF003805">
    <property type="entry name" value="PRK05395.1-2"/>
    <property type="match status" value="1"/>
</dbReference>
<dbReference type="NCBIfam" id="NF003806">
    <property type="entry name" value="PRK05395.1-3"/>
    <property type="match status" value="1"/>
</dbReference>
<dbReference type="NCBIfam" id="NF003807">
    <property type="entry name" value="PRK05395.1-4"/>
    <property type="match status" value="1"/>
</dbReference>
<dbReference type="PANTHER" id="PTHR21272">
    <property type="entry name" value="CATABOLIC 3-DEHYDROQUINASE"/>
    <property type="match status" value="1"/>
</dbReference>
<dbReference type="PANTHER" id="PTHR21272:SF3">
    <property type="entry name" value="CATABOLIC 3-DEHYDROQUINASE"/>
    <property type="match status" value="1"/>
</dbReference>
<dbReference type="Pfam" id="PF01220">
    <property type="entry name" value="DHquinase_II"/>
    <property type="match status" value="1"/>
</dbReference>
<dbReference type="PIRSF" id="PIRSF001399">
    <property type="entry name" value="DHquinase_II"/>
    <property type="match status" value="1"/>
</dbReference>
<dbReference type="SUPFAM" id="SSF52304">
    <property type="entry name" value="Type II 3-dehydroquinate dehydratase"/>
    <property type="match status" value="1"/>
</dbReference>
<dbReference type="PROSITE" id="PS01029">
    <property type="entry name" value="DEHYDROQUINASE_II"/>
    <property type="match status" value="1"/>
</dbReference>
<protein>
    <recommendedName>
        <fullName evidence="1">3-dehydroquinate dehydratase</fullName>
        <shortName evidence="1">3-dehydroquinase</shortName>
        <ecNumber evidence="1">4.2.1.10</ecNumber>
    </recommendedName>
    <alternativeName>
        <fullName evidence="1">Type II DHQase</fullName>
    </alternativeName>
</protein>
<organism>
    <name type="scientific">Gemmatimonas aurantiaca (strain DSM 14586 / JCM 11422 / NBRC 100505 / T-27)</name>
    <dbReference type="NCBI Taxonomy" id="379066"/>
    <lineage>
        <taxon>Bacteria</taxon>
        <taxon>Pseudomonadati</taxon>
        <taxon>Gemmatimonadota</taxon>
        <taxon>Gemmatimonadia</taxon>
        <taxon>Gemmatimonadales</taxon>
        <taxon>Gemmatimonadaceae</taxon>
        <taxon>Gemmatimonas</taxon>
    </lineage>
</organism>